<proteinExistence type="predicted"/>
<name>Y398_METJA</name>
<reference key="1">
    <citation type="journal article" date="1996" name="Science">
        <title>Complete genome sequence of the methanogenic archaeon, Methanococcus jannaschii.</title>
        <authorList>
            <person name="Bult C.J."/>
            <person name="White O."/>
            <person name="Olsen G.J."/>
            <person name="Zhou L."/>
            <person name="Fleischmann R.D."/>
            <person name="Sutton G.G."/>
            <person name="Blake J.A."/>
            <person name="FitzGerald L.M."/>
            <person name="Clayton R.A."/>
            <person name="Gocayne J.D."/>
            <person name="Kerlavage A.R."/>
            <person name="Dougherty B.A."/>
            <person name="Tomb J.-F."/>
            <person name="Adams M.D."/>
            <person name="Reich C.I."/>
            <person name="Overbeek R."/>
            <person name="Kirkness E.F."/>
            <person name="Weinstock K.G."/>
            <person name="Merrick J.M."/>
            <person name="Glodek A."/>
            <person name="Scott J.L."/>
            <person name="Geoghagen N.S.M."/>
            <person name="Weidman J.F."/>
            <person name="Fuhrmann J.L."/>
            <person name="Nguyen D."/>
            <person name="Utterback T.R."/>
            <person name="Kelley J.M."/>
            <person name="Peterson J.D."/>
            <person name="Sadow P.W."/>
            <person name="Hanna M.C."/>
            <person name="Cotton M.D."/>
            <person name="Roberts K.M."/>
            <person name="Hurst M.A."/>
            <person name="Kaine B.P."/>
            <person name="Borodovsky M."/>
            <person name="Klenk H.-P."/>
            <person name="Fraser C.M."/>
            <person name="Smith H.O."/>
            <person name="Woese C.R."/>
            <person name="Venter J.C."/>
        </authorList>
    </citation>
    <scope>NUCLEOTIDE SEQUENCE [LARGE SCALE GENOMIC DNA]</scope>
    <source>
        <strain>ATCC 43067 / DSM 2661 / JAL-1 / JCM 10045 / NBRC 100440</strain>
    </source>
</reference>
<evidence type="ECO:0000255" key="1">
    <source>
        <dbReference type="PROSITE-ProRule" id="PRU00273"/>
    </source>
</evidence>
<organism>
    <name type="scientific">Methanocaldococcus jannaschii (strain ATCC 43067 / DSM 2661 / JAL-1 / JCM 10045 / NBRC 100440)</name>
    <name type="common">Methanococcus jannaschii</name>
    <dbReference type="NCBI Taxonomy" id="243232"/>
    <lineage>
        <taxon>Archaea</taxon>
        <taxon>Methanobacteriati</taxon>
        <taxon>Methanobacteriota</taxon>
        <taxon>Methanomada group</taxon>
        <taxon>Methanococci</taxon>
        <taxon>Methanococcales</taxon>
        <taxon>Methanocaldococcaceae</taxon>
        <taxon>Methanocaldococcus</taxon>
    </lineage>
</organism>
<sequence>MVNLKELSQNEVLELINYVKSLRKQNFSYSQISKKIEIERNIKISKSTIIRWCKNSNNPFNKTKFIDLSPSPELSYIIGVYFGDANIYYRKKTGSYYFRIKVVDKDFVDVVKNSLIKIGLNPTISYVEEKTRSNRWHVEASSKSLYKFLSQNKEELFKVAEKYPEDFLRGFFDSEGYVTSNKIALENYDLELLEFSKELLKKLDVHSTIHIAKKKGTESNIRGEIYHYKDDFYRLSIHRKESVRNFAIKVSFSIKRKRERLQKLLESMDKH</sequence>
<gene>
    <name type="ordered locus">MJ0398</name>
</gene>
<feature type="chain" id="PRO_0000106852" description="Uncharacterized protein MJ0398">
    <location>
        <begin position="1"/>
        <end position="271"/>
    </location>
</feature>
<feature type="domain" description="DOD-type homing endonuclease" evidence="1">
    <location>
        <begin position="77"/>
        <end position="205"/>
    </location>
</feature>
<accession>Q57841</accession>
<keyword id="KW-1185">Reference proteome</keyword>
<dbReference type="EMBL" id="L77117">
    <property type="protein sequence ID" value="AAB98393.1"/>
    <property type="molecule type" value="Genomic_DNA"/>
</dbReference>
<dbReference type="PIR" id="F64349">
    <property type="entry name" value="F64349"/>
</dbReference>
<dbReference type="RefSeq" id="WP_010869897.1">
    <property type="nucleotide sequence ID" value="NC_000909.1"/>
</dbReference>
<dbReference type="SMR" id="Q57841"/>
<dbReference type="FunCoup" id="Q57841">
    <property type="interactions" value="4"/>
</dbReference>
<dbReference type="STRING" id="243232.MJ_0398"/>
<dbReference type="PaxDb" id="243232-MJ_0398"/>
<dbReference type="EnsemblBacteria" id="AAB98393">
    <property type="protein sequence ID" value="AAB98393"/>
    <property type="gene ID" value="MJ_0398"/>
</dbReference>
<dbReference type="GeneID" id="1451257"/>
<dbReference type="KEGG" id="mja:MJ_0398"/>
<dbReference type="eggNOG" id="arCOG03156">
    <property type="taxonomic scope" value="Archaea"/>
</dbReference>
<dbReference type="HOGENOM" id="CLU_914059_0_0_2"/>
<dbReference type="InParanoid" id="Q57841"/>
<dbReference type="OrthoDB" id="65293at2157"/>
<dbReference type="PhylomeDB" id="Q57841"/>
<dbReference type="Proteomes" id="UP000000805">
    <property type="component" value="Chromosome"/>
</dbReference>
<dbReference type="GO" id="GO:0004519">
    <property type="term" value="F:endonuclease activity"/>
    <property type="evidence" value="ECO:0007669"/>
    <property type="project" value="InterPro"/>
</dbReference>
<dbReference type="Gene3D" id="3.10.28.10">
    <property type="entry name" value="Homing endonucleases"/>
    <property type="match status" value="1"/>
</dbReference>
<dbReference type="InterPro" id="IPR027434">
    <property type="entry name" value="Homing_endonucl"/>
</dbReference>
<dbReference type="InterPro" id="IPR004042">
    <property type="entry name" value="Intein_endonuc_central"/>
</dbReference>
<dbReference type="InterPro" id="IPR004860">
    <property type="entry name" value="LAGLIDADG_dom"/>
</dbReference>
<dbReference type="Pfam" id="PF14528">
    <property type="entry name" value="LAGLIDADG_3"/>
    <property type="match status" value="1"/>
</dbReference>
<dbReference type="SUPFAM" id="SSF55608">
    <property type="entry name" value="Homing endonucleases"/>
    <property type="match status" value="2"/>
</dbReference>
<dbReference type="PROSITE" id="PS50819">
    <property type="entry name" value="INTEIN_ENDONUCLEASE"/>
    <property type="match status" value="1"/>
</dbReference>
<protein>
    <recommendedName>
        <fullName>Uncharacterized protein MJ0398</fullName>
    </recommendedName>
</protein>